<keyword id="KW-0963">Cytoplasm</keyword>
<keyword id="KW-0342">GTP-binding</keyword>
<keyword id="KW-0396">Initiation factor</keyword>
<keyword id="KW-0547">Nucleotide-binding</keyword>
<keyword id="KW-0648">Protein biosynthesis</keyword>
<protein>
    <recommendedName>
        <fullName evidence="2">Translation initiation factor IF-2</fullName>
    </recommendedName>
</protein>
<comment type="function">
    <text evidence="2">One of the essential components for the initiation of protein synthesis. Protects formylmethionyl-tRNA from spontaneous hydrolysis and promotes its binding to the 30S ribosomal subunits. Also involved in the hydrolysis of GTP during the formation of the 70S ribosomal complex.</text>
</comment>
<comment type="subcellular location">
    <subcellularLocation>
        <location evidence="2">Cytoplasm</location>
    </subcellularLocation>
</comment>
<comment type="similarity">
    <text evidence="2">Belongs to the TRAFAC class translation factor GTPase superfamily. Classic translation factor GTPase family. IF-2 subfamily.</text>
</comment>
<organism>
    <name type="scientific">Cupriavidus taiwanensis (strain DSM 17343 / BCRC 17206 / CCUG 44338 / CIP 107171 / LMG 19424 / R1)</name>
    <name type="common">Ralstonia taiwanensis (strain LMG 19424)</name>
    <dbReference type="NCBI Taxonomy" id="977880"/>
    <lineage>
        <taxon>Bacteria</taxon>
        <taxon>Pseudomonadati</taxon>
        <taxon>Pseudomonadota</taxon>
        <taxon>Betaproteobacteria</taxon>
        <taxon>Burkholderiales</taxon>
        <taxon>Burkholderiaceae</taxon>
        <taxon>Cupriavidus</taxon>
    </lineage>
</organism>
<feature type="chain" id="PRO_1000093780" description="Translation initiation factor IF-2">
    <location>
        <begin position="1"/>
        <end position="963"/>
    </location>
</feature>
<feature type="domain" description="tr-type G">
    <location>
        <begin position="463"/>
        <end position="632"/>
    </location>
</feature>
<feature type="region of interest" description="Disordered" evidence="3">
    <location>
        <begin position="53"/>
        <end position="377"/>
    </location>
</feature>
<feature type="region of interest" description="G1" evidence="1">
    <location>
        <begin position="472"/>
        <end position="479"/>
    </location>
</feature>
<feature type="region of interest" description="G2" evidence="1">
    <location>
        <begin position="497"/>
        <end position="501"/>
    </location>
</feature>
<feature type="region of interest" description="G3" evidence="1">
    <location>
        <begin position="518"/>
        <end position="521"/>
    </location>
</feature>
<feature type="region of interest" description="G4" evidence="1">
    <location>
        <begin position="572"/>
        <end position="575"/>
    </location>
</feature>
<feature type="region of interest" description="G5" evidence="1">
    <location>
        <begin position="608"/>
        <end position="610"/>
    </location>
</feature>
<feature type="compositionally biased region" description="Basic and acidic residues" evidence="3">
    <location>
        <begin position="53"/>
        <end position="77"/>
    </location>
</feature>
<feature type="compositionally biased region" description="Polar residues" evidence="3">
    <location>
        <begin position="78"/>
        <end position="87"/>
    </location>
</feature>
<feature type="compositionally biased region" description="Basic and acidic residues" evidence="3">
    <location>
        <begin position="98"/>
        <end position="110"/>
    </location>
</feature>
<feature type="compositionally biased region" description="Basic and acidic residues" evidence="3">
    <location>
        <begin position="123"/>
        <end position="183"/>
    </location>
</feature>
<feature type="compositionally biased region" description="Basic and acidic residues" evidence="3">
    <location>
        <begin position="197"/>
        <end position="250"/>
    </location>
</feature>
<feature type="compositionally biased region" description="Basic and acidic residues" evidence="3">
    <location>
        <begin position="267"/>
        <end position="278"/>
    </location>
</feature>
<feature type="compositionally biased region" description="Gly residues" evidence="3">
    <location>
        <begin position="343"/>
        <end position="356"/>
    </location>
</feature>
<feature type="binding site" evidence="2">
    <location>
        <begin position="472"/>
        <end position="479"/>
    </location>
    <ligand>
        <name>GTP</name>
        <dbReference type="ChEBI" id="CHEBI:37565"/>
    </ligand>
</feature>
<feature type="binding site" evidence="2">
    <location>
        <begin position="518"/>
        <end position="522"/>
    </location>
    <ligand>
        <name>GTP</name>
        <dbReference type="ChEBI" id="CHEBI:37565"/>
    </ligand>
</feature>
<feature type="binding site" evidence="2">
    <location>
        <begin position="572"/>
        <end position="575"/>
    </location>
    <ligand>
        <name>GTP</name>
        <dbReference type="ChEBI" id="CHEBI:37565"/>
    </ligand>
</feature>
<reference key="1">
    <citation type="journal article" date="2008" name="Genome Res.">
        <title>Genome sequence of the beta-rhizobium Cupriavidus taiwanensis and comparative genomics of rhizobia.</title>
        <authorList>
            <person name="Amadou C."/>
            <person name="Pascal G."/>
            <person name="Mangenot S."/>
            <person name="Glew M."/>
            <person name="Bontemps C."/>
            <person name="Capela D."/>
            <person name="Carrere S."/>
            <person name="Cruveiller S."/>
            <person name="Dossat C."/>
            <person name="Lajus A."/>
            <person name="Marchetti M."/>
            <person name="Poinsot V."/>
            <person name="Rouy Z."/>
            <person name="Servin B."/>
            <person name="Saad M."/>
            <person name="Schenowitz C."/>
            <person name="Barbe V."/>
            <person name="Batut J."/>
            <person name="Medigue C."/>
            <person name="Masson-Boivin C."/>
        </authorList>
    </citation>
    <scope>NUCLEOTIDE SEQUENCE [LARGE SCALE GENOMIC DNA]</scope>
    <source>
        <strain>DSM 17343 / BCRC 17206 / CCUG 44338 / CIP 107171 / LMG 19424 / R1</strain>
    </source>
</reference>
<accession>B3R1E4</accession>
<name>IF2_CUPTR</name>
<evidence type="ECO:0000250" key="1"/>
<evidence type="ECO:0000255" key="2">
    <source>
        <dbReference type="HAMAP-Rule" id="MF_00100"/>
    </source>
</evidence>
<evidence type="ECO:0000256" key="3">
    <source>
        <dbReference type="SAM" id="MobiDB-lite"/>
    </source>
</evidence>
<proteinExistence type="inferred from homology"/>
<sequence length="963" mass="103804">MASTTVAQLAAELSRSAAALLEQLQAAGVGKATPEDIITESDKTRLLDYLKRSHGQADDSARKKITLTKRETSEIRQSDATGKTRTVQVEVRKKRVLIKRDDAAPEHQADGAEAQAHVVDAAEEARREEEERRQAEQLARQEAEAKAAREAAEREEAERRARQEALEAEQRRQAELAARKAEEEAAASRAVTEANEDTSRKKAEDEKARVAAERAEAQKAADEAKAAADKARAEQEIAARKRREAAEAEARAIQQMLNAPARVLKAPSERKAEEKKAEQTGTLHKPVKPAGTEAKPGEKKPVTATATTTTDKKGKVVKAGTSSTWQDEGSRKKGSGLKTRGDSSGGVGGWRGGPRGRGGRQQQHDDSRSNFQAPTEPVVREVHVPETISVADLAHKMAVKASEVIKQMMKLGQMVTINQVLDQETAMIVVEEMGHKAYAAKLDDPEALLVVDGEEHEDAELLPRPPVVTVMGHVDHGKTSLLDYIRRTKVAAGEAGGITQHIGAYHVETDRGVITFLDTPGHEAFTAMRARGAKATDIVILVVAADDGVMPQTKEAIAHAKAAGVPIVVAINKVDKPEANPDRVKQELVAEQVVPEEYGGDSPFVPVSAKTGAGIEDLLEQVSLQAEVLELKAPVDAPAKGLVVEAQLDKGKGPIATILVSSGTLKRGDVVLAGSAYGRVRAMLDENGKATKEAGPSIPVEIQGLSEVPAAGEEVLVLPDERKAREIALFRQGKFRDVKLAKQQAAKLENMLEQMTEGEVQTLPLIVKADVQGSQEALVQSLQKLSTAEVRVQIVHGGVGGISESDVNLATASKAVIIGFNVRADAGARKLAEHNGIDIRYYNIIYDAVDEIKAAMSGMLAPEKRETTTGTVEVRQVFRVPKVGAVAGCMVTDGVVKRNSLVRVLRNNVVIHDGELDSLKRFKDDVKEVKQGFECGLSIKNFNDVQEGDQLEVYEITEVARTL</sequence>
<gene>
    <name evidence="2" type="primary">infB</name>
    <name type="ordered locus">RALTA_A1850</name>
</gene>
<dbReference type="EMBL" id="CU633749">
    <property type="protein sequence ID" value="CAQ69791.1"/>
    <property type="molecule type" value="Genomic_DNA"/>
</dbReference>
<dbReference type="RefSeq" id="WP_012353108.1">
    <property type="nucleotide sequence ID" value="NC_010528.1"/>
</dbReference>
<dbReference type="SMR" id="B3R1E4"/>
<dbReference type="GeneID" id="29760508"/>
<dbReference type="KEGG" id="cti:RALTA_A1850"/>
<dbReference type="eggNOG" id="COG0532">
    <property type="taxonomic scope" value="Bacteria"/>
</dbReference>
<dbReference type="HOGENOM" id="CLU_006301_6_0_4"/>
<dbReference type="BioCyc" id="CTAI977880:RALTA_RS08915-MONOMER"/>
<dbReference type="Proteomes" id="UP000001692">
    <property type="component" value="Chromosome 1"/>
</dbReference>
<dbReference type="GO" id="GO:0005829">
    <property type="term" value="C:cytosol"/>
    <property type="evidence" value="ECO:0007669"/>
    <property type="project" value="TreeGrafter"/>
</dbReference>
<dbReference type="GO" id="GO:0005525">
    <property type="term" value="F:GTP binding"/>
    <property type="evidence" value="ECO:0007669"/>
    <property type="project" value="UniProtKB-KW"/>
</dbReference>
<dbReference type="GO" id="GO:0003924">
    <property type="term" value="F:GTPase activity"/>
    <property type="evidence" value="ECO:0007669"/>
    <property type="project" value="UniProtKB-UniRule"/>
</dbReference>
<dbReference type="GO" id="GO:0097216">
    <property type="term" value="F:guanosine tetraphosphate binding"/>
    <property type="evidence" value="ECO:0007669"/>
    <property type="project" value="UniProtKB-ARBA"/>
</dbReference>
<dbReference type="GO" id="GO:0003743">
    <property type="term" value="F:translation initiation factor activity"/>
    <property type="evidence" value="ECO:0007669"/>
    <property type="project" value="UniProtKB-UniRule"/>
</dbReference>
<dbReference type="CDD" id="cd01887">
    <property type="entry name" value="IF2_eIF5B"/>
    <property type="match status" value="1"/>
</dbReference>
<dbReference type="CDD" id="cd03702">
    <property type="entry name" value="IF2_mtIF2_II"/>
    <property type="match status" value="1"/>
</dbReference>
<dbReference type="CDD" id="cd03692">
    <property type="entry name" value="mtIF2_IVc"/>
    <property type="match status" value="1"/>
</dbReference>
<dbReference type="FunFam" id="2.40.30.10:FF:000007">
    <property type="entry name" value="Translation initiation factor IF-2"/>
    <property type="match status" value="1"/>
</dbReference>
<dbReference type="FunFam" id="2.40.30.10:FF:000008">
    <property type="entry name" value="Translation initiation factor IF-2"/>
    <property type="match status" value="1"/>
</dbReference>
<dbReference type="FunFam" id="3.40.50.10050:FF:000001">
    <property type="entry name" value="Translation initiation factor IF-2"/>
    <property type="match status" value="1"/>
</dbReference>
<dbReference type="FunFam" id="3.40.50.300:FF:000019">
    <property type="entry name" value="Translation initiation factor IF-2"/>
    <property type="match status" value="1"/>
</dbReference>
<dbReference type="Gene3D" id="3.40.50.300">
    <property type="entry name" value="P-loop containing nucleotide triphosphate hydrolases"/>
    <property type="match status" value="1"/>
</dbReference>
<dbReference type="Gene3D" id="3.30.56.50">
    <property type="entry name" value="Putative DNA-binding domain, N-terminal subdomain of bacterial translation initiation factor IF2"/>
    <property type="match status" value="1"/>
</dbReference>
<dbReference type="Gene3D" id="2.40.30.10">
    <property type="entry name" value="Translation factors"/>
    <property type="match status" value="2"/>
</dbReference>
<dbReference type="Gene3D" id="3.40.50.10050">
    <property type="entry name" value="Translation initiation factor IF- 2, domain 3"/>
    <property type="match status" value="1"/>
</dbReference>
<dbReference type="HAMAP" id="MF_00100_B">
    <property type="entry name" value="IF_2_B"/>
    <property type="match status" value="1"/>
</dbReference>
<dbReference type="InterPro" id="IPR009061">
    <property type="entry name" value="DNA-bd_dom_put_sf"/>
</dbReference>
<dbReference type="InterPro" id="IPR053905">
    <property type="entry name" value="EF-G-like_DII"/>
</dbReference>
<dbReference type="InterPro" id="IPR004161">
    <property type="entry name" value="EFTu-like_2"/>
</dbReference>
<dbReference type="InterPro" id="IPR013575">
    <property type="entry name" value="IF2_assoc_dom_bac"/>
</dbReference>
<dbReference type="InterPro" id="IPR044145">
    <property type="entry name" value="IF2_II"/>
</dbReference>
<dbReference type="InterPro" id="IPR006847">
    <property type="entry name" value="IF2_N"/>
</dbReference>
<dbReference type="InterPro" id="IPR027417">
    <property type="entry name" value="P-loop_NTPase"/>
</dbReference>
<dbReference type="InterPro" id="IPR005225">
    <property type="entry name" value="Small_GTP-bd"/>
</dbReference>
<dbReference type="InterPro" id="IPR000795">
    <property type="entry name" value="T_Tr_GTP-bd_dom"/>
</dbReference>
<dbReference type="InterPro" id="IPR000178">
    <property type="entry name" value="TF_IF2_bacterial-like"/>
</dbReference>
<dbReference type="InterPro" id="IPR015760">
    <property type="entry name" value="TIF_IF2"/>
</dbReference>
<dbReference type="InterPro" id="IPR023115">
    <property type="entry name" value="TIF_IF2_dom3"/>
</dbReference>
<dbReference type="InterPro" id="IPR036925">
    <property type="entry name" value="TIF_IF2_dom3_sf"/>
</dbReference>
<dbReference type="InterPro" id="IPR009000">
    <property type="entry name" value="Transl_B-barrel_sf"/>
</dbReference>
<dbReference type="NCBIfam" id="TIGR00487">
    <property type="entry name" value="IF-2"/>
    <property type="match status" value="1"/>
</dbReference>
<dbReference type="NCBIfam" id="TIGR00231">
    <property type="entry name" value="small_GTP"/>
    <property type="match status" value="1"/>
</dbReference>
<dbReference type="PANTHER" id="PTHR43381:SF5">
    <property type="entry name" value="TR-TYPE G DOMAIN-CONTAINING PROTEIN"/>
    <property type="match status" value="1"/>
</dbReference>
<dbReference type="PANTHER" id="PTHR43381">
    <property type="entry name" value="TRANSLATION INITIATION FACTOR IF-2-RELATED"/>
    <property type="match status" value="1"/>
</dbReference>
<dbReference type="Pfam" id="PF22042">
    <property type="entry name" value="EF-G_D2"/>
    <property type="match status" value="1"/>
</dbReference>
<dbReference type="Pfam" id="PF00009">
    <property type="entry name" value="GTP_EFTU"/>
    <property type="match status" value="1"/>
</dbReference>
<dbReference type="Pfam" id="PF03144">
    <property type="entry name" value="GTP_EFTU_D2"/>
    <property type="match status" value="1"/>
</dbReference>
<dbReference type="Pfam" id="PF11987">
    <property type="entry name" value="IF-2"/>
    <property type="match status" value="1"/>
</dbReference>
<dbReference type="Pfam" id="PF08364">
    <property type="entry name" value="IF2_assoc"/>
    <property type="match status" value="1"/>
</dbReference>
<dbReference type="Pfam" id="PF04760">
    <property type="entry name" value="IF2_N"/>
    <property type="match status" value="2"/>
</dbReference>
<dbReference type="SUPFAM" id="SSF52156">
    <property type="entry name" value="Initiation factor IF2/eIF5b, domain 3"/>
    <property type="match status" value="1"/>
</dbReference>
<dbReference type="SUPFAM" id="SSF52540">
    <property type="entry name" value="P-loop containing nucleoside triphosphate hydrolases"/>
    <property type="match status" value="1"/>
</dbReference>
<dbReference type="SUPFAM" id="SSF46955">
    <property type="entry name" value="Putative DNA-binding domain"/>
    <property type="match status" value="1"/>
</dbReference>
<dbReference type="SUPFAM" id="SSF50447">
    <property type="entry name" value="Translation proteins"/>
    <property type="match status" value="2"/>
</dbReference>
<dbReference type="PROSITE" id="PS51722">
    <property type="entry name" value="G_TR_2"/>
    <property type="match status" value="1"/>
</dbReference>
<dbReference type="PROSITE" id="PS01176">
    <property type="entry name" value="IF2"/>
    <property type="match status" value="1"/>
</dbReference>